<proteinExistence type="inferred from homology"/>
<comment type="function">
    <text evidence="1">Catalyzes the addition and repair of the essential 3'-terminal CCA sequence in tRNAs without using a nucleic acid template. Adds these three nucleotides in the order of C, C, and A to the tRNA nucleotide-73, using CTP and ATP as substrates and producing inorganic pyrophosphate. tRNA 3'-terminal CCA addition is required both for tRNA processing and repair. Also involved in tRNA surveillance by mediating tandem CCA addition to generate a CCACCA at the 3' terminus of unstable tRNAs. While stable tRNAs receive only 3'-terminal CCA, unstable tRNAs are marked with CCACCA and rapidly degraded.</text>
</comment>
<comment type="catalytic activity">
    <reaction evidence="1">
        <text>a tRNA precursor + 2 CTP + ATP = a tRNA with a 3' CCA end + 3 diphosphate</text>
        <dbReference type="Rhea" id="RHEA:14433"/>
        <dbReference type="Rhea" id="RHEA-COMP:10465"/>
        <dbReference type="Rhea" id="RHEA-COMP:10468"/>
        <dbReference type="ChEBI" id="CHEBI:30616"/>
        <dbReference type="ChEBI" id="CHEBI:33019"/>
        <dbReference type="ChEBI" id="CHEBI:37563"/>
        <dbReference type="ChEBI" id="CHEBI:74896"/>
        <dbReference type="ChEBI" id="CHEBI:83071"/>
        <dbReference type="EC" id="2.7.7.72"/>
    </reaction>
</comment>
<comment type="catalytic activity">
    <reaction evidence="1">
        <text>a tRNA with a 3' CCA end + 2 CTP + ATP = a tRNA with a 3' CCACCA end + 3 diphosphate</text>
        <dbReference type="Rhea" id="RHEA:76235"/>
        <dbReference type="Rhea" id="RHEA-COMP:10468"/>
        <dbReference type="Rhea" id="RHEA-COMP:18655"/>
        <dbReference type="ChEBI" id="CHEBI:30616"/>
        <dbReference type="ChEBI" id="CHEBI:33019"/>
        <dbReference type="ChEBI" id="CHEBI:37563"/>
        <dbReference type="ChEBI" id="CHEBI:83071"/>
        <dbReference type="ChEBI" id="CHEBI:195187"/>
    </reaction>
    <physiologicalReaction direction="left-to-right" evidence="1">
        <dbReference type="Rhea" id="RHEA:76236"/>
    </physiologicalReaction>
</comment>
<comment type="cofactor">
    <cofactor evidence="1">
        <name>Mg(2+)</name>
        <dbReference type="ChEBI" id="CHEBI:18420"/>
    </cofactor>
    <text evidence="1">Magnesium is required for nucleotidyltransferase activity.</text>
</comment>
<comment type="cofactor">
    <cofactor evidence="1">
        <name>Ni(2+)</name>
        <dbReference type="ChEBI" id="CHEBI:49786"/>
    </cofactor>
    <text evidence="1">Nickel for phosphatase activity.</text>
</comment>
<comment type="subunit">
    <text evidence="1">Monomer. Can also form homodimers and oligomers.</text>
</comment>
<comment type="domain">
    <text evidence="1">Comprises two domains: an N-terminal domain containing the nucleotidyltransferase activity and a C-terminal HD domain associated with both phosphodiesterase and phosphatase activities.</text>
</comment>
<comment type="miscellaneous">
    <text evidence="1">A single active site specifically recognizes both ATP and CTP and is responsible for their addition.</text>
</comment>
<comment type="similarity">
    <text evidence="1">Belongs to the tRNA nucleotidyltransferase/poly(A) polymerase family. Bacterial CCA-adding enzyme type 1 subfamily.</text>
</comment>
<accession>B0U6J4</accession>
<reference key="1">
    <citation type="journal article" date="2010" name="J. Bacteriol.">
        <title>Whole genome sequences of two Xylella fastidiosa strains (M12 and M23) causing almond leaf scorch disease in California.</title>
        <authorList>
            <person name="Chen J."/>
            <person name="Xie G."/>
            <person name="Han S."/>
            <person name="Chertkov O."/>
            <person name="Sims D."/>
            <person name="Civerolo E.L."/>
        </authorList>
    </citation>
    <scope>NUCLEOTIDE SEQUENCE [LARGE SCALE GENOMIC DNA]</scope>
    <source>
        <strain>M12</strain>
    </source>
</reference>
<dbReference type="EC" id="2.7.7.72" evidence="1"/>
<dbReference type="EC" id="3.1.3.-" evidence="1"/>
<dbReference type="EC" id="3.1.4.-" evidence="1"/>
<dbReference type="EMBL" id="CP000941">
    <property type="protein sequence ID" value="ACA11710.1"/>
    <property type="molecule type" value="Genomic_DNA"/>
</dbReference>
<dbReference type="RefSeq" id="WP_004083844.1">
    <property type="nucleotide sequence ID" value="NC_010513.1"/>
</dbReference>
<dbReference type="SMR" id="B0U6J4"/>
<dbReference type="KEGG" id="xfm:Xfasm12_0715"/>
<dbReference type="HOGENOM" id="CLU_015961_1_1_6"/>
<dbReference type="GO" id="GO:0005524">
    <property type="term" value="F:ATP binding"/>
    <property type="evidence" value="ECO:0007669"/>
    <property type="project" value="UniProtKB-UniRule"/>
</dbReference>
<dbReference type="GO" id="GO:0004810">
    <property type="term" value="F:CCA tRNA nucleotidyltransferase activity"/>
    <property type="evidence" value="ECO:0007669"/>
    <property type="project" value="UniProtKB-UniRule"/>
</dbReference>
<dbReference type="GO" id="GO:0004112">
    <property type="term" value="F:cyclic-nucleotide phosphodiesterase activity"/>
    <property type="evidence" value="ECO:0007669"/>
    <property type="project" value="UniProtKB-UniRule"/>
</dbReference>
<dbReference type="GO" id="GO:0000287">
    <property type="term" value="F:magnesium ion binding"/>
    <property type="evidence" value="ECO:0007669"/>
    <property type="project" value="UniProtKB-UniRule"/>
</dbReference>
<dbReference type="GO" id="GO:0016791">
    <property type="term" value="F:phosphatase activity"/>
    <property type="evidence" value="ECO:0007669"/>
    <property type="project" value="UniProtKB-UniRule"/>
</dbReference>
<dbReference type="GO" id="GO:0000049">
    <property type="term" value="F:tRNA binding"/>
    <property type="evidence" value="ECO:0007669"/>
    <property type="project" value="UniProtKB-UniRule"/>
</dbReference>
<dbReference type="GO" id="GO:0042245">
    <property type="term" value="P:RNA repair"/>
    <property type="evidence" value="ECO:0007669"/>
    <property type="project" value="UniProtKB-KW"/>
</dbReference>
<dbReference type="GO" id="GO:0001680">
    <property type="term" value="P:tRNA 3'-terminal CCA addition"/>
    <property type="evidence" value="ECO:0007669"/>
    <property type="project" value="UniProtKB-UniRule"/>
</dbReference>
<dbReference type="CDD" id="cd05398">
    <property type="entry name" value="NT_ClassII-CCAase"/>
    <property type="match status" value="1"/>
</dbReference>
<dbReference type="Gene3D" id="3.30.460.10">
    <property type="entry name" value="Beta Polymerase, domain 2"/>
    <property type="match status" value="1"/>
</dbReference>
<dbReference type="Gene3D" id="1.10.3090.10">
    <property type="entry name" value="cca-adding enzyme, domain 2"/>
    <property type="match status" value="1"/>
</dbReference>
<dbReference type="HAMAP" id="MF_01261">
    <property type="entry name" value="CCA_bact_type1"/>
    <property type="match status" value="1"/>
</dbReference>
<dbReference type="InterPro" id="IPR012006">
    <property type="entry name" value="CCA_bact"/>
</dbReference>
<dbReference type="InterPro" id="IPR006674">
    <property type="entry name" value="HD_domain"/>
</dbReference>
<dbReference type="InterPro" id="IPR043519">
    <property type="entry name" value="NT_sf"/>
</dbReference>
<dbReference type="InterPro" id="IPR002646">
    <property type="entry name" value="PolA_pol_head_dom"/>
</dbReference>
<dbReference type="InterPro" id="IPR032828">
    <property type="entry name" value="PolyA_RNA-bd"/>
</dbReference>
<dbReference type="InterPro" id="IPR050124">
    <property type="entry name" value="tRNA_CCA-adding_enzyme"/>
</dbReference>
<dbReference type="NCBIfam" id="NF008137">
    <property type="entry name" value="PRK10885.1"/>
    <property type="match status" value="1"/>
</dbReference>
<dbReference type="PANTHER" id="PTHR47545">
    <property type="entry name" value="MULTIFUNCTIONAL CCA PROTEIN"/>
    <property type="match status" value="1"/>
</dbReference>
<dbReference type="PANTHER" id="PTHR47545:SF1">
    <property type="entry name" value="MULTIFUNCTIONAL CCA PROTEIN"/>
    <property type="match status" value="1"/>
</dbReference>
<dbReference type="Pfam" id="PF01743">
    <property type="entry name" value="PolyA_pol"/>
    <property type="match status" value="1"/>
</dbReference>
<dbReference type="Pfam" id="PF12627">
    <property type="entry name" value="PolyA_pol_RNAbd"/>
    <property type="match status" value="1"/>
</dbReference>
<dbReference type="PIRSF" id="PIRSF000813">
    <property type="entry name" value="CCA_bact"/>
    <property type="match status" value="1"/>
</dbReference>
<dbReference type="SUPFAM" id="SSF81301">
    <property type="entry name" value="Nucleotidyltransferase"/>
    <property type="match status" value="1"/>
</dbReference>
<dbReference type="SUPFAM" id="SSF81891">
    <property type="entry name" value="Poly A polymerase C-terminal region-like"/>
    <property type="match status" value="1"/>
</dbReference>
<dbReference type="PROSITE" id="PS51831">
    <property type="entry name" value="HD"/>
    <property type="match status" value="1"/>
</dbReference>
<protein>
    <recommendedName>
        <fullName evidence="1">Multifunctional CCA protein</fullName>
    </recommendedName>
    <domain>
        <recommendedName>
            <fullName evidence="1">CCA-adding enzyme</fullName>
            <ecNumber evidence="1">2.7.7.72</ecNumber>
        </recommendedName>
        <alternativeName>
            <fullName evidence="1">CCA tRNA nucleotidyltransferase</fullName>
        </alternativeName>
        <alternativeName>
            <fullName evidence="1">tRNA CCA-pyrophosphorylase</fullName>
        </alternativeName>
        <alternativeName>
            <fullName evidence="1">tRNA adenylyl-/cytidylyl-transferase</fullName>
        </alternativeName>
        <alternativeName>
            <fullName evidence="1">tRNA nucleotidyltransferase</fullName>
        </alternativeName>
        <alternativeName>
            <fullName evidence="1">tRNA-NT</fullName>
        </alternativeName>
    </domain>
    <domain>
        <recommendedName>
            <fullName evidence="1">2'-nucleotidase</fullName>
            <ecNumber evidence="1">3.1.3.-</ecNumber>
        </recommendedName>
    </domain>
    <domain>
        <recommendedName>
            <fullName evidence="1">2',3'-cyclic phosphodiesterase</fullName>
            <ecNumber evidence="1">3.1.4.-</ecNumber>
        </recommendedName>
    </domain>
    <domain>
        <recommendedName>
            <fullName evidence="1">Phosphatase</fullName>
            <ecNumber evidence="1">3.1.3.-</ecNumber>
        </recommendedName>
    </domain>
</protein>
<organism>
    <name type="scientific">Xylella fastidiosa (strain M12)</name>
    <dbReference type="NCBI Taxonomy" id="405440"/>
    <lineage>
        <taxon>Bacteria</taxon>
        <taxon>Pseudomonadati</taxon>
        <taxon>Pseudomonadota</taxon>
        <taxon>Gammaproteobacteria</taxon>
        <taxon>Lysobacterales</taxon>
        <taxon>Lysobacteraceae</taxon>
        <taxon>Xylella</taxon>
    </lineage>
</organism>
<sequence>MKSYLVGGAVRDALLGQPAGDCDWVVVGADPAHMKSLGFKPVGRDFPVFLHPKTGEEFALARTERKNGHGYRGFIVNADPTVTLEQDLQRRDFTINAIARDQTNSTLIDPYGGVNDLEQRVLRHISPAFAEDPLRVLRAARFMARLAPLGFSIAPETLAMMRQMVANGELNSLIPERIWKELSRSLAYTQPAAFLHTLRTVNALEVVLPELNALYGVPQHADYHPEIDTGLHQELVSDIAAKLAPGDMLIGFAALCHDLGKALTPRATWPHHPMHEQRGMAPTQQLSERLKVPRDYQQLALIACREHLNVHRLSKLHDHTVYELLQRCDAFRRPERIAQLAIVCEADYRGRYGHEDANYPQGQHLCRLHAAALAVNARDLNRQDLHGTQIGEALAQARIRAISSAGVYDGGTGTNF</sequence>
<gene>
    <name evidence="1" type="primary">cca</name>
    <name type="ordered locus">Xfasm12_0715</name>
</gene>
<evidence type="ECO:0000255" key="1">
    <source>
        <dbReference type="HAMAP-Rule" id="MF_01261"/>
    </source>
</evidence>
<keyword id="KW-0067">ATP-binding</keyword>
<keyword id="KW-0378">Hydrolase</keyword>
<keyword id="KW-0460">Magnesium</keyword>
<keyword id="KW-0479">Metal-binding</keyword>
<keyword id="KW-0511">Multifunctional enzyme</keyword>
<keyword id="KW-0533">Nickel</keyword>
<keyword id="KW-0547">Nucleotide-binding</keyword>
<keyword id="KW-0548">Nucleotidyltransferase</keyword>
<keyword id="KW-0692">RNA repair</keyword>
<keyword id="KW-0694">RNA-binding</keyword>
<keyword id="KW-0808">Transferase</keyword>
<keyword id="KW-0819">tRNA processing</keyword>
<name>CCA_XYLFM</name>
<feature type="chain" id="PRO_1000140061" description="Multifunctional CCA protein">
    <location>
        <begin position="1"/>
        <end position="416"/>
    </location>
</feature>
<feature type="domain" description="HD" evidence="1">
    <location>
        <begin position="229"/>
        <end position="331"/>
    </location>
</feature>
<feature type="binding site" evidence="1">
    <location>
        <position position="8"/>
    </location>
    <ligand>
        <name>ATP</name>
        <dbReference type="ChEBI" id="CHEBI:30616"/>
    </ligand>
</feature>
<feature type="binding site" evidence="1">
    <location>
        <position position="8"/>
    </location>
    <ligand>
        <name>CTP</name>
        <dbReference type="ChEBI" id="CHEBI:37563"/>
    </ligand>
</feature>
<feature type="binding site" evidence="1">
    <location>
        <position position="11"/>
    </location>
    <ligand>
        <name>ATP</name>
        <dbReference type="ChEBI" id="CHEBI:30616"/>
    </ligand>
</feature>
<feature type="binding site" evidence="1">
    <location>
        <position position="11"/>
    </location>
    <ligand>
        <name>CTP</name>
        <dbReference type="ChEBI" id="CHEBI:37563"/>
    </ligand>
</feature>
<feature type="binding site" evidence="1">
    <location>
        <position position="21"/>
    </location>
    <ligand>
        <name>Mg(2+)</name>
        <dbReference type="ChEBI" id="CHEBI:18420"/>
    </ligand>
</feature>
<feature type="binding site" evidence="1">
    <location>
        <position position="23"/>
    </location>
    <ligand>
        <name>Mg(2+)</name>
        <dbReference type="ChEBI" id="CHEBI:18420"/>
    </ligand>
</feature>
<feature type="binding site" evidence="1">
    <location>
        <position position="91"/>
    </location>
    <ligand>
        <name>ATP</name>
        <dbReference type="ChEBI" id="CHEBI:30616"/>
    </ligand>
</feature>
<feature type="binding site" evidence="1">
    <location>
        <position position="91"/>
    </location>
    <ligand>
        <name>CTP</name>
        <dbReference type="ChEBI" id="CHEBI:37563"/>
    </ligand>
</feature>
<feature type="binding site" evidence="1">
    <location>
        <position position="138"/>
    </location>
    <ligand>
        <name>ATP</name>
        <dbReference type="ChEBI" id="CHEBI:30616"/>
    </ligand>
</feature>
<feature type="binding site" evidence="1">
    <location>
        <position position="138"/>
    </location>
    <ligand>
        <name>CTP</name>
        <dbReference type="ChEBI" id="CHEBI:37563"/>
    </ligand>
</feature>
<feature type="binding site" evidence="1">
    <location>
        <position position="141"/>
    </location>
    <ligand>
        <name>ATP</name>
        <dbReference type="ChEBI" id="CHEBI:30616"/>
    </ligand>
</feature>
<feature type="binding site" evidence="1">
    <location>
        <position position="141"/>
    </location>
    <ligand>
        <name>CTP</name>
        <dbReference type="ChEBI" id="CHEBI:37563"/>
    </ligand>
</feature>